<sequence>MRTPLLAGNWKMYKTTGEARELVEGLLHGLGDVSDRKVLVCPPFTALHTVRDLVQGTPIALGAQDVYIEPQGAFTGAISPVMLRDLGCTYVIVGHSERRAIFGEGDELIGKKVRAALAHDLTPILCVGETKPQRDAGEAETIVVAQVRAALAGMTPDQIARIVIAYEPVWAIGTGDTATPADAQAMHVTIRQTLGELAGSDVADAINILYGGSVKPDNIDDLMAQPDIDGALVGGASLKADSFLRIVHFLPIQG</sequence>
<comment type="function">
    <text evidence="1">Involved in the gluconeogenesis. Catalyzes stereospecifically the conversion of dihydroxyacetone phosphate (DHAP) to D-glyceraldehyde-3-phosphate (G3P).</text>
</comment>
<comment type="catalytic activity">
    <reaction evidence="1">
        <text>D-glyceraldehyde 3-phosphate = dihydroxyacetone phosphate</text>
        <dbReference type="Rhea" id="RHEA:18585"/>
        <dbReference type="ChEBI" id="CHEBI:57642"/>
        <dbReference type="ChEBI" id="CHEBI:59776"/>
        <dbReference type="EC" id="5.3.1.1"/>
    </reaction>
</comment>
<comment type="pathway">
    <text evidence="1">Carbohydrate biosynthesis; gluconeogenesis.</text>
</comment>
<comment type="pathway">
    <text evidence="1">Carbohydrate degradation; glycolysis; D-glyceraldehyde 3-phosphate from glycerone phosphate: step 1/1.</text>
</comment>
<comment type="subunit">
    <text evidence="1">Homodimer.</text>
</comment>
<comment type="subcellular location">
    <subcellularLocation>
        <location evidence="1">Cytoplasm</location>
    </subcellularLocation>
</comment>
<comment type="similarity">
    <text evidence="1">Belongs to the triosephosphate isomerase family.</text>
</comment>
<feature type="chain" id="PRO_1000009854" description="Triosephosphate isomerase">
    <location>
        <begin position="1"/>
        <end position="254"/>
    </location>
</feature>
<feature type="active site" description="Electrophile" evidence="1">
    <location>
        <position position="95"/>
    </location>
</feature>
<feature type="active site" description="Proton acceptor" evidence="1">
    <location>
        <position position="167"/>
    </location>
</feature>
<feature type="binding site" evidence="1">
    <location>
        <begin position="9"/>
        <end position="11"/>
    </location>
    <ligand>
        <name>substrate</name>
    </ligand>
</feature>
<feature type="binding site" evidence="1">
    <location>
        <position position="173"/>
    </location>
    <ligand>
        <name>substrate</name>
    </ligand>
</feature>
<feature type="binding site" evidence="1">
    <location>
        <position position="213"/>
    </location>
    <ligand>
        <name>substrate</name>
    </ligand>
</feature>
<feature type="binding site" evidence="1">
    <location>
        <begin position="234"/>
        <end position="235"/>
    </location>
    <ligand>
        <name>substrate</name>
    </ligand>
</feature>
<protein>
    <recommendedName>
        <fullName evidence="1">Triosephosphate isomerase</fullName>
        <shortName evidence="1">TIM</shortName>
        <shortName evidence="1">TPI</shortName>
        <ecNumber evidence="1">5.3.1.1</ecNumber>
    </recommendedName>
    <alternativeName>
        <fullName evidence="1">Triose-phosphate isomerase</fullName>
    </alternativeName>
</protein>
<reference key="1">
    <citation type="submission" date="2007-04" db="EMBL/GenBank/DDBJ databases">
        <title>Complete sequence of Roseiflexus sp. RS-1.</title>
        <authorList>
            <consortium name="US DOE Joint Genome Institute"/>
            <person name="Copeland A."/>
            <person name="Lucas S."/>
            <person name="Lapidus A."/>
            <person name="Barry K."/>
            <person name="Detter J.C."/>
            <person name="Glavina del Rio T."/>
            <person name="Hammon N."/>
            <person name="Israni S."/>
            <person name="Dalin E."/>
            <person name="Tice H."/>
            <person name="Pitluck S."/>
            <person name="Chertkov O."/>
            <person name="Brettin T."/>
            <person name="Bruce D."/>
            <person name="Han C."/>
            <person name="Schmutz J."/>
            <person name="Larimer F."/>
            <person name="Land M."/>
            <person name="Hauser L."/>
            <person name="Kyrpides N."/>
            <person name="Mikhailova N."/>
            <person name="Bryant D.A."/>
            <person name="Richardson P."/>
        </authorList>
    </citation>
    <scope>NUCLEOTIDE SEQUENCE [LARGE SCALE GENOMIC DNA]</scope>
    <source>
        <strain>RS-1</strain>
    </source>
</reference>
<organism>
    <name type="scientific">Roseiflexus sp. (strain RS-1)</name>
    <dbReference type="NCBI Taxonomy" id="357808"/>
    <lineage>
        <taxon>Bacteria</taxon>
        <taxon>Bacillati</taxon>
        <taxon>Chloroflexota</taxon>
        <taxon>Chloroflexia</taxon>
        <taxon>Chloroflexales</taxon>
        <taxon>Roseiflexineae</taxon>
        <taxon>Roseiflexaceae</taxon>
        <taxon>Roseiflexus</taxon>
    </lineage>
</organism>
<name>TPIS_ROSS1</name>
<evidence type="ECO:0000255" key="1">
    <source>
        <dbReference type="HAMAP-Rule" id="MF_00147"/>
    </source>
</evidence>
<gene>
    <name evidence="1" type="primary">tpiA</name>
    <name type="ordered locus">RoseRS_3813</name>
</gene>
<dbReference type="EC" id="5.3.1.1" evidence="1"/>
<dbReference type="EMBL" id="CP000686">
    <property type="protein sequence ID" value="ABQ92167.1"/>
    <property type="molecule type" value="Genomic_DNA"/>
</dbReference>
<dbReference type="RefSeq" id="WP_011958508.1">
    <property type="nucleotide sequence ID" value="NC_009523.1"/>
</dbReference>
<dbReference type="SMR" id="A5UZW4"/>
<dbReference type="STRING" id="357808.RoseRS_3813"/>
<dbReference type="KEGG" id="rrs:RoseRS_3813"/>
<dbReference type="eggNOG" id="COG0149">
    <property type="taxonomic scope" value="Bacteria"/>
</dbReference>
<dbReference type="HOGENOM" id="CLU_024251_2_3_0"/>
<dbReference type="OrthoDB" id="9809429at2"/>
<dbReference type="UniPathway" id="UPA00109">
    <property type="reaction ID" value="UER00189"/>
</dbReference>
<dbReference type="UniPathway" id="UPA00138"/>
<dbReference type="Proteomes" id="UP000006554">
    <property type="component" value="Chromosome"/>
</dbReference>
<dbReference type="GO" id="GO:0005829">
    <property type="term" value="C:cytosol"/>
    <property type="evidence" value="ECO:0007669"/>
    <property type="project" value="TreeGrafter"/>
</dbReference>
<dbReference type="GO" id="GO:0004807">
    <property type="term" value="F:triose-phosphate isomerase activity"/>
    <property type="evidence" value="ECO:0007669"/>
    <property type="project" value="UniProtKB-UniRule"/>
</dbReference>
<dbReference type="GO" id="GO:0006094">
    <property type="term" value="P:gluconeogenesis"/>
    <property type="evidence" value="ECO:0007669"/>
    <property type="project" value="UniProtKB-UniRule"/>
</dbReference>
<dbReference type="GO" id="GO:0046166">
    <property type="term" value="P:glyceraldehyde-3-phosphate biosynthetic process"/>
    <property type="evidence" value="ECO:0007669"/>
    <property type="project" value="TreeGrafter"/>
</dbReference>
<dbReference type="GO" id="GO:0019563">
    <property type="term" value="P:glycerol catabolic process"/>
    <property type="evidence" value="ECO:0007669"/>
    <property type="project" value="TreeGrafter"/>
</dbReference>
<dbReference type="GO" id="GO:0006096">
    <property type="term" value="P:glycolytic process"/>
    <property type="evidence" value="ECO:0007669"/>
    <property type="project" value="UniProtKB-UniRule"/>
</dbReference>
<dbReference type="CDD" id="cd00311">
    <property type="entry name" value="TIM"/>
    <property type="match status" value="1"/>
</dbReference>
<dbReference type="FunFam" id="3.20.20.70:FF:000016">
    <property type="entry name" value="Triosephosphate isomerase"/>
    <property type="match status" value="1"/>
</dbReference>
<dbReference type="Gene3D" id="3.20.20.70">
    <property type="entry name" value="Aldolase class I"/>
    <property type="match status" value="1"/>
</dbReference>
<dbReference type="HAMAP" id="MF_00147_B">
    <property type="entry name" value="TIM_B"/>
    <property type="match status" value="1"/>
</dbReference>
<dbReference type="InterPro" id="IPR013785">
    <property type="entry name" value="Aldolase_TIM"/>
</dbReference>
<dbReference type="InterPro" id="IPR035990">
    <property type="entry name" value="TIM_sf"/>
</dbReference>
<dbReference type="InterPro" id="IPR022896">
    <property type="entry name" value="TrioseP_Isoase_bac/euk"/>
</dbReference>
<dbReference type="InterPro" id="IPR000652">
    <property type="entry name" value="Triosephosphate_isomerase"/>
</dbReference>
<dbReference type="InterPro" id="IPR020861">
    <property type="entry name" value="Triosephosphate_isomerase_AS"/>
</dbReference>
<dbReference type="NCBIfam" id="TIGR00419">
    <property type="entry name" value="tim"/>
    <property type="match status" value="1"/>
</dbReference>
<dbReference type="PANTHER" id="PTHR21139">
    <property type="entry name" value="TRIOSEPHOSPHATE ISOMERASE"/>
    <property type="match status" value="1"/>
</dbReference>
<dbReference type="PANTHER" id="PTHR21139:SF42">
    <property type="entry name" value="TRIOSEPHOSPHATE ISOMERASE"/>
    <property type="match status" value="1"/>
</dbReference>
<dbReference type="Pfam" id="PF00121">
    <property type="entry name" value="TIM"/>
    <property type="match status" value="1"/>
</dbReference>
<dbReference type="SUPFAM" id="SSF51351">
    <property type="entry name" value="Triosephosphate isomerase (TIM)"/>
    <property type="match status" value="1"/>
</dbReference>
<dbReference type="PROSITE" id="PS00171">
    <property type="entry name" value="TIM_1"/>
    <property type="match status" value="1"/>
</dbReference>
<dbReference type="PROSITE" id="PS51440">
    <property type="entry name" value="TIM_2"/>
    <property type="match status" value="1"/>
</dbReference>
<keyword id="KW-0963">Cytoplasm</keyword>
<keyword id="KW-0312">Gluconeogenesis</keyword>
<keyword id="KW-0324">Glycolysis</keyword>
<keyword id="KW-0413">Isomerase</keyword>
<proteinExistence type="inferred from homology"/>
<accession>A5UZW4</accession>